<accession>Q48SL8</accession>
<evidence type="ECO:0000255" key="1">
    <source>
        <dbReference type="HAMAP-Rule" id="MF_02002"/>
    </source>
</evidence>
<comment type="function">
    <text evidence="1">Catalyzes the attachment of isoleucine to tRNA(Ile). As IleRS can inadvertently accommodate and process structurally similar amino acids such as valine, to avoid such errors it has two additional distinct tRNA(Ile)-dependent editing activities. One activity is designated as 'pretransfer' editing and involves the hydrolysis of activated Val-AMP. The other activity is designated 'posttransfer' editing and involves deacylation of mischarged Val-tRNA(Ile).</text>
</comment>
<comment type="catalytic activity">
    <reaction evidence="1">
        <text>tRNA(Ile) + L-isoleucine + ATP = L-isoleucyl-tRNA(Ile) + AMP + diphosphate</text>
        <dbReference type="Rhea" id="RHEA:11060"/>
        <dbReference type="Rhea" id="RHEA-COMP:9666"/>
        <dbReference type="Rhea" id="RHEA-COMP:9695"/>
        <dbReference type="ChEBI" id="CHEBI:30616"/>
        <dbReference type="ChEBI" id="CHEBI:33019"/>
        <dbReference type="ChEBI" id="CHEBI:58045"/>
        <dbReference type="ChEBI" id="CHEBI:78442"/>
        <dbReference type="ChEBI" id="CHEBI:78528"/>
        <dbReference type="ChEBI" id="CHEBI:456215"/>
        <dbReference type="EC" id="6.1.1.5"/>
    </reaction>
</comment>
<comment type="subunit">
    <text evidence="1">Monomer.</text>
</comment>
<comment type="subcellular location">
    <subcellularLocation>
        <location evidence="1">Cytoplasm</location>
    </subcellularLocation>
</comment>
<comment type="domain">
    <text evidence="1">IleRS has two distinct active sites: one for aminoacylation and one for editing. The misactivated valine is translocated from the active site to the editing site, which sterically excludes the correctly activated isoleucine. The single editing site contains two valyl binding pockets, one specific for each substrate (Val-AMP or Val-tRNA(Ile)).</text>
</comment>
<comment type="similarity">
    <text evidence="1">Belongs to the class-I aminoacyl-tRNA synthetase family. IleS type 1 subfamily.</text>
</comment>
<reference key="1">
    <citation type="journal article" date="2005" name="J. Infect. Dis.">
        <title>Genome sequence of a serotype M28 strain of group A Streptococcus: potential new insights into puerperal sepsis and bacterial disease specificity.</title>
        <authorList>
            <person name="Green N.M."/>
            <person name="Zhang S."/>
            <person name="Porcella S.F."/>
            <person name="Nagiec M.J."/>
            <person name="Barbian K.D."/>
            <person name="Beres S.B."/>
            <person name="Lefebvre R.B."/>
            <person name="Musser J.M."/>
        </authorList>
    </citation>
    <scope>NUCLEOTIDE SEQUENCE [LARGE SCALE GENOMIC DNA]</scope>
    <source>
        <strain>MGAS6180</strain>
    </source>
</reference>
<proteinExistence type="inferred from homology"/>
<keyword id="KW-0030">Aminoacyl-tRNA synthetase</keyword>
<keyword id="KW-0067">ATP-binding</keyword>
<keyword id="KW-0963">Cytoplasm</keyword>
<keyword id="KW-0436">Ligase</keyword>
<keyword id="KW-0547">Nucleotide-binding</keyword>
<keyword id="KW-0648">Protein biosynthesis</keyword>
<sequence length="933" mass="105069">MKLKETLNLGKTAFPMRAGLPNKEPQWQAAWEQAELYKKRQELNAGKPAFHLHDGPPYANGNIHVGHALNKISKDIIVRSKSMSGFQAPYVPGWDTHGLPIEQVLAKQGIKRKEMDLAEYLEMCRQYALSQVDKQRDDFKRLGVSADWENPYVTLDPQFEADQIRVFGAMAEKGYIYRGAKPVYWSWSSESALAEAEIEYHDIDSTSLYYANKVKDGKGILDTNTYIVVWTTTPFTVTASRGLTVGPDMDYLVVKPAGSDRQYVVAEGLLDSLAGKFGWESFETLASHKGADLEYIVTEHPWDTDVEELVILGDHVTLESGTGIVHTAPGFGEDDYNVGTKYKLEVAVTVDERGLMTENAGPDFHGQFYNKVTPIVIDKLGDLLLAQEVINHSYPFDWRTKKPIIWRAVPQWFASVSDFRQDILDEIEKTTFHPSWGETRLYNMIRDRGDWVISRQRAWGVPLPIFYAEDGTAIMTKEVTDHVADLFQENGSIIWWQKEAKDLLPEGFTHPGSPNGEFTKETDIMDVWFDSGSSWNGVMNTKENLSYPADLYLEGSDQYRGWFNSSLITSVAVNGHAPYKAILSQGFVLDGKGEKMSKSKGNIISPNDVAKQYGADILRLWVASVDTDNDVRVSMEILGQVSETYRKIRNTLRFLIANTSDFNPATDTVAYADLGAVDKYMTIVFNQLVATITDAYERYDFMAIYKAVVNFVTVDLSAFYLDFAKDVVYIEAANSLERRRMQTVFYDILVKITKLLTPILPHTTEEIWSYLEHESEAFVQLAEMPVAETFSAQEDILEAWSAFMTLRTQAQKALEEARNAKIIGKSLEAHLTIYASEEVKTLLTALDSDIALLLIVSQLTIADLADAPADAVAFEGIAFMVEHAIGEVCERSRRIDPTTRMRSYNAFVCDHSAKIIEENFPEAVAEGFEESDK</sequence>
<gene>
    <name evidence="1" type="primary">ileS</name>
    <name type="ordered locus">M28_Spy1182</name>
</gene>
<protein>
    <recommendedName>
        <fullName evidence="1">Isoleucine--tRNA ligase</fullName>
        <ecNumber evidence="1">6.1.1.5</ecNumber>
    </recommendedName>
    <alternativeName>
        <fullName evidence="1">Isoleucyl-tRNA synthetase</fullName>
        <shortName evidence="1">IleRS</shortName>
    </alternativeName>
</protein>
<name>SYI_STRPM</name>
<feature type="chain" id="PRO_0000098483" description="Isoleucine--tRNA ligase">
    <location>
        <begin position="1"/>
        <end position="933"/>
    </location>
</feature>
<feature type="short sequence motif" description="'HIGH' region">
    <location>
        <begin position="57"/>
        <end position="67"/>
    </location>
</feature>
<feature type="short sequence motif" description="'KMSKS' region">
    <location>
        <begin position="595"/>
        <end position="599"/>
    </location>
</feature>
<feature type="binding site" evidence="1">
    <location>
        <position position="554"/>
    </location>
    <ligand>
        <name>L-isoleucyl-5'-AMP</name>
        <dbReference type="ChEBI" id="CHEBI:178002"/>
    </ligand>
</feature>
<feature type="binding site" evidence="1">
    <location>
        <position position="598"/>
    </location>
    <ligand>
        <name>ATP</name>
        <dbReference type="ChEBI" id="CHEBI:30616"/>
    </ligand>
</feature>
<dbReference type="EC" id="6.1.1.5" evidence="1"/>
<dbReference type="EMBL" id="CP000056">
    <property type="protein sequence ID" value="AAX72292.1"/>
    <property type="molecule type" value="Genomic_DNA"/>
</dbReference>
<dbReference type="RefSeq" id="WP_011284956.1">
    <property type="nucleotide sequence ID" value="NC_007296.2"/>
</dbReference>
<dbReference type="SMR" id="Q48SL8"/>
<dbReference type="KEGG" id="spb:M28_Spy1182"/>
<dbReference type="HOGENOM" id="CLU_001493_7_1_9"/>
<dbReference type="GO" id="GO:0005829">
    <property type="term" value="C:cytosol"/>
    <property type="evidence" value="ECO:0007669"/>
    <property type="project" value="TreeGrafter"/>
</dbReference>
<dbReference type="GO" id="GO:0002161">
    <property type="term" value="F:aminoacyl-tRNA deacylase activity"/>
    <property type="evidence" value="ECO:0007669"/>
    <property type="project" value="InterPro"/>
</dbReference>
<dbReference type="GO" id="GO:0005524">
    <property type="term" value="F:ATP binding"/>
    <property type="evidence" value="ECO:0007669"/>
    <property type="project" value="UniProtKB-UniRule"/>
</dbReference>
<dbReference type="GO" id="GO:0004822">
    <property type="term" value="F:isoleucine-tRNA ligase activity"/>
    <property type="evidence" value="ECO:0007669"/>
    <property type="project" value="UniProtKB-UniRule"/>
</dbReference>
<dbReference type="GO" id="GO:0000049">
    <property type="term" value="F:tRNA binding"/>
    <property type="evidence" value="ECO:0007669"/>
    <property type="project" value="InterPro"/>
</dbReference>
<dbReference type="GO" id="GO:0006428">
    <property type="term" value="P:isoleucyl-tRNA aminoacylation"/>
    <property type="evidence" value="ECO:0007669"/>
    <property type="project" value="UniProtKB-UniRule"/>
</dbReference>
<dbReference type="CDD" id="cd07960">
    <property type="entry name" value="Anticodon_Ia_Ile_BEm"/>
    <property type="match status" value="1"/>
</dbReference>
<dbReference type="CDD" id="cd00818">
    <property type="entry name" value="IleRS_core"/>
    <property type="match status" value="1"/>
</dbReference>
<dbReference type="FunFam" id="1.10.10.830:FF:000001">
    <property type="entry name" value="Isoleucine--tRNA ligase"/>
    <property type="match status" value="1"/>
</dbReference>
<dbReference type="FunFam" id="1.10.730.20:FF:000001">
    <property type="entry name" value="Isoleucine--tRNA ligase"/>
    <property type="match status" value="1"/>
</dbReference>
<dbReference type="FunFam" id="3.40.50.620:FF:000092">
    <property type="entry name" value="Isoleucine--tRNA ligase"/>
    <property type="match status" value="1"/>
</dbReference>
<dbReference type="FunFam" id="3.90.740.10:FF:000006">
    <property type="entry name" value="Isoleucine--tRNA ligase"/>
    <property type="match status" value="1"/>
</dbReference>
<dbReference type="Gene3D" id="1.10.730.20">
    <property type="match status" value="1"/>
</dbReference>
<dbReference type="Gene3D" id="3.40.50.620">
    <property type="entry name" value="HUPs"/>
    <property type="match status" value="2"/>
</dbReference>
<dbReference type="Gene3D" id="1.10.10.830">
    <property type="entry name" value="Ile-tRNA synthetase CP2 domain-like"/>
    <property type="match status" value="1"/>
</dbReference>
<dbReference type="HAMAP" id="MF_02002">
    <property type="entry name" value="Ile_tRNA_synth_type1"/>
    <property type="match status" value="1"/>
</dbReference>
<dbReference type="InterPro" id="IPR001412">
    <property type="entry name" value="aa-tRNA-synth_I_CS"/>
</dbReference>
<dbReference type="InterPro" id="IPR002300">
    <property type="entry name" value="aa-tRNA-synth_Ia"/>
</dbReference>
<dbReference type="InterPro" id="IPR033708">
    <property type="entry name" value="Anticodon_Ile_BEm"/>
</dbReference>
<dbReference type="InterPro" id="IPR002301">
    <property type="entry name" value="Ile-tRNA-ligase"/>
</dbReference>
<dbReference type="InterPro" id="IPR023585">
    <property type="entry name" value="Ile-tRNA-ligase_type1"/>
</dbReference>
<dbReference type="InterPro" id="IPR050081">
    <property type="entry name" value="Ile-tRNA_ligase"/>
</dbReference>
<dbReference type="InterPro" id="IPR013155">
    <property type="entry name" value="M/V/L/I-tRNA-synth_anticd-bd"/>
</dbReference>
<dbReference type="InterPro" id="IPR014729">
    <property type="entry name" value="Rossmann-like_a/b/a_fold"/>
</dbReference>
<dbReference type="InterPro" id="IPR009080">
    <property type="entry name" value="tRNAsynth_Ia_anticodon-bd"/>
</dbReference>
<dbReference type="InterPro" id="IPR009008">
    <property type="entry name" value="Val/Leu/Ile-tRNA-synth_edit"/>
</dbReference>
<dbReference type="NCBIfam" id="TIGR00392">
    <property type="entry name" value="ileS"/>
    <property type="match status" value="1"/>
</dbReference>
<dbReference type="PANTHER" id="PTHR42765:SF1">
    <property type="entry name" value="ISOLEUCINE--TRNA LIGASE, MITOCHONDRIAL"/>
    <property type="match status" value="1"/>
</dbReference>
<dbReference type="PANTHER" id="PTHR42765">
    <property type="entry name" value="SOLEUCYL-TRNA SYNTHETASE"/>
    <property type="match status" value="1"/>
</dbReference>
<dbReference type="Pfam" id="PF08264">
    <property type="entry name" value="Anticodon_1"/>
    <property type="match status" value="1"/>
</dbReference>
<dbReference type="Pfam" id="PF00133">
    <property type="entry name" value="tRNA-synt_1"/>
    <property type="match status" value="1"/>
</dbReference>
<dbReference type="PRINTS" id="PR00984">
    <property type="entry name" value="TRNASYNTHILE"/>
</dbReference>
<dbReference type="SUPFAM" id="SSF47323">
    <property type="entry name" value="Anticodon-binding domain of a subclass of class I aminoacyl-tRNA synthetases"/>
    <property type="match status" value="1"/>
</dbReference>
<dbReference type="SUPFAM" id="SSF52374">
    <property type="entry name" value="Nucleotidylyl transferase"/>
    <property type="match status" value="1"/>
</dbReference>
<dbReference type="SUPFAM" id="SSF50677">
    <property type="entry name" value="ValRS/IleRS/LeuRS editing domain"/>
    <property type="match status" value="1"/>
</dbReference>
<dbReference type="PROSITE" id="PS00178">
    <property type="entry name" value="AA_TRNA_LIGASE_I"/>
    <property type="match status" value="1"/>
</dbReference>
<organism>
    <name type="scientific">Streptococcus pyogenes serotype M28 (strain MGAS6180)</name>
    <dbReference type="NCBI Taxonomy" id="319701"/>
    <lineage>
        <taxon>Bacteria</taxon>
        <taxon>Bacillati</taxon>
        <taxon>Bacillota</taxon>
        <taxon>Bacilli</taxon>
        <taxon>Lactobacillales</taxon>
        <taxon>Streptococcaceae</taxon>
        <taxon>Streptococcus</taxon>
    </lineage>
</organism>